<sequence length="108" mass="12055">MGFEQGDAKKGANLFKTRCAQCHTLKAGEGNKIGPELHGLFGRKTGSVAGYSYTDANKQKGIEWNHDTLFEYLENPKKYIPGTKMAFGGLKKPKDRNDLITFLEQETK</sequence>
<protein>
    <recommendedName>
        <fullName>Cytochrome c</fullName>
    </recommendedName>
</protein>
<feature type="chain" id="PRO_0000108320" description="Cytochrome c">
    <location>
        <begin position="1"/>
        <end position="108"/>
    </location>
</feature>
<feature type="binding site" description="covalent" evidence="1">
    <location>
        <position position="19"/>
    </location>
    <ligand>
        <name>heme c</name>
        <dbReference type="ChEBI" id="CHEBI:61717"/>
    </ligand>
</feature>
<feature type="binding site" description="covalent" evidence="1">
    <location>
        <position position="22"/>
    </location>
    <ligand>
        <name>heme c</name>
        <dbReference type="ChEBI" id="CHEBI:61717"/>
    </ligand>
</feature>
<feature type="binding site" description="axial binding residue" evidence="1">
    <location>
        <position position="23"/>
    </location>
    <ligand>
        <name>heme c</name>
        <dbReference type="ChEBI" id="CHEBI:61717"/>
    </ligand>
    <ligandPart>
        <name>Fe</name>
        <dbReference type="ChEBI" id="CHEBI:18248"/>
    </ligandPart>
</feature>
<feature type="binding site" description="axial binding residue" evidence="1">
    <location>
        <position position="85"/>
    </location>
    <ligand>
        <name>heme c</name>
        <dbReference type="ChEBI" id="CHEBI:61717"/>
    </ligand>
    <ligandPart>
        <name>Fe</name>
        <dbReference type="ChEBI" id="CHEBI:18248"/>
    </ligandPart>
</feature>
<dbReference type="EMBL" id="AY034827">
    <property type="protein sequence ID" value="AAK67492.1"/>
    <property type="molecule type" value="mRNA"/>
</dbReference>
<dbReference type="SMR" id="Q96VP3"/>
<dbReference type="Allergome" id="3572">
    <property type="allergen name" value="Cur l 3"/>
</dbReference>
<dbReference type="Allergome" id="3573">
    <property type="allergen name" value="Cur l 3.0101"/>
</dbReference>
<dbReference type="OMA" id="KARCAQC"/>
<dbReference type="GO" id="GO:0005758">
    <property type="term" value="C:mitochondrial intermembrane space"/>
    <property type="evidence" value="ECO:0007669"/>
    <property type="project" value="UniProtKB-SubCell"/>
</dbReference>
<dbReference type="GO" id="GO:0009055">
    <property type="term" value="F:electron transfer activity"/>
    <property type="evidence" value="ECO:0007669"/>
    <property type="project" value="InterPro"/>
</dbReference>
<dbReference type="GO" id="GO:0020037">
    <property type="term" value="F:heme binding"/>
    <property type="evidence" value="ECO:0007669"/>
    <property type="project" value="InterPro"/>
</dbReference>
<dbReference type="GO" id="GO:0046872">
    <property type="term" value="F:metal ion binding"/>
    <property type="evidence" value="ECO:0007669"/>
    <property type="project" value="UniProtKB-KW"/>
</dbReference>
<dbReference type="FunFam" id="1.10.760.10:FF:000001">
    <property type="entry name" value="Cytochrome c iso-1"/>
    <property type="match status" value="1"/>
</dbReference>
<dbReference type="Gene3D" id="1.10.760.10">
    <property type="entry name" value="Cytochrome c-like domain"/>
    <property type="match status" value="1"/>
</dbReference>
<dbReference type="InterPro" id="IPR009056">
    <property type="entry name" value="Cyt_c-like_dom"/>
</dbReference>
<dbReference type="InterPro" id="IPR036909">
    <property type="entry name" value="Cyt_c-like_dom_sf"/>
</dbReference>
<dbReference type="InterPro" id="IPR002327">
    <property type="entry name" value="Cyt_c_1A/1B"/>
</dbReference>
<dbReference type="PANTHER" id="PTHR11961">
    <property type="entry name" value="CYTOCHROME C"/>
    <property type="match status" value="1"/>
</dbReference>
<dbReference type="Pfam" id="PF00034">
    <property type="entry name" value="Cytochrom_C"/>
    <property type="match status" value="1"/>
</dbReference>
<dbReference type="PRINTS" id="PR00604">
    <property type="entry name" value="CYTCHRMECIAB"/>
</dbReference>
<dbReference type="SUPFAM" id="SSF46626">
    <property type="entry name" value="Cytochrome c"/>
    <property type="match status" value="1"/>
</dbReference>
<dbReference type="PROSITE" id="PS51007">
    <property type="entry name" value="CYTC"/>
    <property type="match status" value="1"/>
</dbReference>
<keyword id="KW-0249">Electron transport</keyword>
<keyword id="KW-0349">Heme</keyword>
<keyword id="KW-0408">Iron</keyword>
<keyword id="KW-0479">Metal-binding</keyword>
<keyword id="KW-0496">Mitochondrion</keyword>
<keyword id="KW-0679">Respiratory chain</keyword>
<keyword id="KW-0813">Transport</keyword>
<organism>
    <name type="scientific">Cochliobolus lunatus</name>
    <name type="common">Filamentous fungus</name>
    <name type="synonym">Curvularia lunata</name>
    <dbReference type="NCBI Taxonomy" id="5503"/>
    <lineage>
        <taxon>Eukaryota</taxon>
        <taxon>Fungi</taxon>
        <taxon>Dikarya</taxon>
        <taxon>Ascomycota</taxon>
        <taxon>Pezizomycotina</taxon>
        <taxon>Dothideomycetes</taxon>
        <taxon>Pleosporomycetidae</taxon>
        <taxon>Pleosporales</taxon>
        <taxon>Pleosporineae</taxon>
        <taxon>Pleosporaceae</taxon>
        <taxon>Curvularia</taxon>
    </lineage>
</organism>
<evidence type="ECO:0000255" key="1">
    <source>
        <dbReference type="PROSITE-ProRule" id="PRU00433"/>
    </source>
</evidence>
<evidence type="ECO:0000305" key="2"/>
<comment type="function">
    <text>Electron carrier protein. The oxidized form of the cytochrome c heme group can accept an electron from the heme group of the cytochrome c1 subunit of cytochrome reductase. Cytochrome c then transfers this electron to the cytochrome oxidase complex, the final protein carrier in the mitochondrial electron-transport chain.</text>
</comment>
<comment type="subcellular location">
    <subcellularLocation>
        <location>Mitochondrion intermembrane space</location>
    </subcellularLocation>
    <text>Loosely associated with the inner membrane.</text>
</comment>
<comment type="PTM">
    <text>Binds 1 heme c group covalently per subunit.</text>
</comment>
<comment type="similarity">
    <text evidence="2">Belongs to the cytochrome c family.</text>
</comment>
<comment type="online information" name="Protein Spotlight">
    <link uri="https://www.proteinspotlight.org/back_issues/076"/>
    <text>Life shuttle - Issue 76 of November 2006</text>
</comment>
<accession>Q96VP3</accession>
<name>CYC_COCLU</name>
<proteinExistence type="inferred from homology"/>
<reference key="1">
    <citation type="submission" date="2001-05" db="EMBL/GenBank/DDBJ databases">
        <title>cDNA sequence encoding cytochrome c from Curvularia lunata.</title>
        <authorList>
            <person name="Gupta R."/>
            <person name="Arora N."/>
        </authorList>
    </citation>
    <scope>NUCLEOTIDE SEQUENCE [MRNA]</scope>
</reference>